<protein>
    <recommendedName>
        <fullName evidence="1">Chitooligosaccharide deacetylase</fullName>
        <shortName evidence="1">COD</shortName>
        <ecNumber evidence="1">3.5.1.105</ecNumber>
    </recommendedName>
    <alternativeName>
        <fullName evidence="1">Chitin disaccharide deacetylase</fullName>
    </alternativeName>
    <alternativeName>
        <fullName evidence="1">Chitobiose deacetylase</fullName>
    </alternativeName>
    <alternativeName>
        <fullName evidence="1">Chitobiose-6P deacetylase</fullName>
    </alternativeName>
    <alternativeName>
        <fullName evidence="1">Chitotriose deacetylase</fullName>
    </alternativeName>
    <alternativeName>
        <fullName evidence="1">Chitotriose-6P deacetylase</fullName>
    </alternativeName>
</protein>
<name>CHBG_SALEP</name>
<organism>
    <name type="scientific">Salmonella enteritidis PT4 (strain P125109)</name>
    <dbReference type="NCBI Taxonomy" id="550537"/>
    <lineage>
        <taxon>Bacteria</taxon>
        <taxon>Pseudomonadati</taxon>
        <taxon>Pseudomonadota</taxon>
        <taxon>Gammaproteobacteria</taxon>
        <taxon>Enterobacterales</taxon>
        <taxon>Enterobacteriaceae</taxon>
        <taxon>Salmonella</taxon>
    </lineage>
</organism>
<comment type="function">
    <text evidence="1">Involved in the degradation of chitin. ChbG is essential for growth on the acetylated chitooligosaccharides chitobiose and chitotriose but is dispensable for growth on cellobiose and chitosan dimer, the deacetylated form of chitobiose. Deacetylation of chitobiose-6-P and chitotriose-6-P is necessary for both the activation of the chb promoter by the regulatory protein ChbR and the hydrolysis of phosphorylated beta-glucosides by the phospho-beta-glucosidase ChbF. Catalyzes the removal of only one acetyl group from chitobiose-6-P to yield monoacetylchitobiose-6-P, the inducer of ChbR and the substrate of ChbF.</text>
</comment>
<comment type="catalytic activity">
    <reaction evidence="1">
        <text>N,N'-diacetylchitobiose + H2O = N-acetyl-beta-D-glucosaminyl-(1-&gt;4)-D-glucosamine + acetate</text>
        <dbReference type="Rhea" id="RHEA:27469"/>
        <dbReference type="ChEBI" id="CHEBI:15377"/>
        <dbReference type="ChEBI" id="CHEBI:28681"/>
        <dbReference type="ChEBI" id="CHEBI:30089"/>
        <dbReference type="ChEBI" id="CHEBI:59910"/>
        <dbReference type="EC" id="3.5.1.105"/>
    </reaction>
</comment>
<comment type="catalytic activity">
    <reaction evidence="1">
        <text>diacetylchitobiose-6'-phosphate + H2O = N'-monoacetylchitobiose-6'-phosphate + acetate</text>
        <dbReference type="Rhea" id="RHEA:35083"/>
        <dbReference type="ChEBI" id="CHEBI:15377"/>
        <dbReference type="ChEBI" id="CHEBI:30089"/>
        <dbReference type="ChEBI" id="CHEBI:64883"/>
        <dbReference type="ChEBI" id="CHEBI:71315"/>
    </reaction>
</comment>
<comment type="cofactor">
    <cofactor evidence="1">
        <name>Mg(2+)</name>
        <dbReference type="ChEBI" id="CHEBI:18420"/>
    </cofactor>
</comment>
<comment type="pathway">
    <text evidence="1">Glycan degradation; chitin degradation.</text>
</comment>
<comment type="subunit">
    <text evidence="1">Homodimer.</text>
</comment>
<comment type="subcellular location">
    <subcellularLocation>
        <location evidence="1">Cytoplasm</location>
    </subcellularLocation>
</comment>
<comment type="similarity">
    <text evidence="1">Belongs to the YdjC deacetylase family. ChbG subfamily.</text>
</comment>
<keyword id="KW-0119">Carbohydrate metabolism</keyword>
<keyword id="KW-0146">Chitin degradation</keyword>
<keyword id="KW-0963">Cytoplasm</keyword>
<keyword id="KW-0378">Hydrolase</keyword>
<keyword id="KW-0460">Magnesium</keyword>
<keyword id="KW-0479">Metal-binding</keyword>
<keyword id="KW-0624">Polysaccharide degradation</keyword>
<reference key="1">
    <citation type="journal article" date="2008" name="Genome Res.">
        <title>Comparative genome analysis of Salmonella enteritidis PT4 and Salmonella gallinarum 287/91 provides insights into evolutionary and host adaptation pathways.</title>
        <authorList>
            <person name="Thomson N.R."/>
            <person name="Clayton D.J."/>
            <person name="Windhorst D."/>
            <person name="Vernikos G."/>
            <person name="Davidson S."/>
            <person name="Churcher C."/>
            <person name="Quail M.A."/>
            <person name="Stevens M."/>
            <person name="Jones M.A."/>
            <person name="Watson M."/>
            <person name="Barron A."/>
            <person name="Layton A."/>
            <person name="Pickard D."/>
            <person name="Kingsley R.A."/>
            <person name="Bignell A."/>
            <person name="Clark L."/>
            <person name="Harris B."/>
            <person name="Ormond D."/>
            <person name="Abdellah Z."/>
            <person name="Brooks K."/>
            <person name="Cherevach I."/>
            <person name="Chillingworth T."/>
            <person name="Woodward J."/>
            <person name="Norberczak H."/>
            <person name="Lord A."/>
            <person name="Arrowsmith C."/>
            <person name="Jagels K."/>
            <person name="Moule S."/>
            <person name="Mungall K."/>
            <person name="Saunders M."/>
            <person name="Whitehead S."/>
            <person name="Chabalgoity J.A."/>
            <person name="Maskell D."/>
            <person name="Humphreys T."/>
            <person name="Roberts M."/>
            <person name="Barrow P.A."/>
            <person name="Dougan G."/>
            <person name="Parkhill J."/>
        </authorList>
    </citation>
    <scope>NUCLEOTIDE SEQUENCE [LARGE SCALE GENOMIC DNA]</scope>
    <source>
        <strain>P125109</strain>
    </source>
</reference>
<proteinExistence type="inferred from homology"/>
<accession>B5QWH6</accession>
<sequence>MERVLIVNADDFGLSKGQNYGIVEAYRNGVVTSTTALVNGEAIDHAAQLSRELPALGVGMHFVLTLGKPVSEMPGLTRDGLLGKWIWQMAEEDTLPLDEIAHELACQYQRFIDVFGREPTHLDSHHHVHMFPQIFPIVAHFAAQRGIALRIDRQTVLNADDLPSDLRSTQGFSSEFYGEEITEACFLRILDASAHRGEASLEVMCHPAFVDNIIRQSAYCYPRLTELEVLTSASLKAAIAERGYRPGCFLDI</sequence>
<dbReference type="EC" id="3.5.1.105" evidence="1"/>
<dbReference type="EMBL" id="AM933172">
    <property type="protein sequence ID" value="CAR33307.1"/>
    <property type="molecule type" value="Genomic_DNA"/>
</dbReference>
<dbReference type="RefSeq" id="WP_000442726.1">
    <property type="nucleotide sequence ID" value="NC_011294.1"/>
</dbReference>
<dbReference type="SMR" id="B5QWH6"/>
<dbReference type="KEGG" id="set:SEN1726"/>
<dbReference type="HOGENOM" id="CLU_064244_4_1_6"/>
<dbReference type="UniPathway" id="UPA00349"/>
<dbReference type="Proteomes" id="UP000000613">
    <property type="component" value="Chromosome"/>
</dbReference>
<dbReference type="GO" id="GO:0005737">
    <property type="term" value="C:cytoplasm"/>
    <property type="evidence" value="ECO:0007669"/>
    <property type="project" value="UniProtKB-SubCell"/>
</dbReference>
<dbReference type="GO" id="GO:0036311">
    <property type="term" value="F:chitin disaccharide deacetylase activity"/>
    <property type="evidence" value="ECO:0007669"/>
    <property type="project" value="UniProtKB-UniRule"/>
</dbReference>
<dbReference type="GO" id="GO:0019213">
    <property type="term" value="F:deacetylase activity"/>
    <property type="evidence" value="ECO:0007669"/>
    <property type="project" value="TreeGrafter"/>
</dbReference>
<dbReference type="GO" id="GO:0046872">
    <property type="term" value="F:metal ion binding"/>
    <property type="evidence" value="ECO:0007669"/>
    <property type="project" value="UniProtKB-KW"/>
</dbReference>
<dbReference type="GO" id="GO:0006032">
    <property type="term" value="P:chitin catabolic process"/>
    <property type="evidence" value="ECO:0007669"/>
    <property type="project" value="UniProtKB-UniPathway"/>
</dbReference>
<dbReference type="GO" id="GO:0052777">
    <property type="term" value="P:diacetylchitobiose catabolic process"/>
    <property type="evidence" value="ECO:0007669"/>
    <property type="project" value="UniProtKB-UniRule"/>
</dbReference>
<dbReference type="GO" id="GO:0000272">
    <property type="term" value="P:polysaccharide catabolic process"/>
    <property type="evidence" value="ECO:0007669"/>
    <property type="project" value="UniProtKB-UniRule"/>
</dbReference>
<dbReference type="CDD" id="cd10803">
    <property type="entry name" value="YdjC_EF3048_like"/>
    <property type="match status" value="1"/>
</dbReference>
<dbReference type="FunFam" id="3.20.20.370:FF:000001">
    <property type="entry name" value="Chitooligosaccharide deacetylase"/>
    <property type="match status" value="1"/>
</dbReference>
<dbReference type="Gene3D" id="3.20.20.370">
    <property type="entry name" value="Glycoside hydrolase/deacetylase"/>
    <property type="match status" value="1"/>
</dbReference>
<dbReference type="HAMAP" id="MF_01246">
    <property type="entry name" value="COD"/>
    <property type="match status" value="1"/>
</dbReference>
<dbReference type="InterPro" id="IPR022948">
    <property type="entry name" value="COD_ChbG_bac"/>
</dbReference>
<dbReference type="InterPro" id="IPR011330">
    <property type="entry name" value="Glyco_hydro/deAcase_b/a-brl"/>
</dbReference>
<dbReference type="InterPro" id="IPR006879">
    <property type="entry name" value="YdjC-like"/>
</dbReference>
<dbReference type="NCBIfam" id="NF002559">
    <property type="entry name" value="PRK02134.1"/>
    <property type="match status" value="1"/>
</dbReference>
<dbReference type="PANTHER" id="PTHR31609:SF1">
    <property type="entry name" value="CARBOHYDRATE DEACETYLASE"/>
    <property type="match status" value="1"/>
</dbReference>
<dbReference type="PANTHER" id="PTHR31609">
    <property type="entry name" value="YDJC DEACETYLASE FAMILY MEMBER"/>
    <property type="match status" value="1"/>
</dbReference>
<dbReference type="Pfam" id="PF04794">
    <property type="entry name" value="YdjC"/>
    <property type="match status" value="1"/>
</dbReference>
<dbReference type="SUPFAM" id="SSF88713">
    <property type="entry name" value="Glycoside hydrolase/deacetylase"/>
    <property type="match status" value="1"/>
</dbReference>
<gene>
    <name evidence="1" type="primary">chbG</name>
    <name type="ordered locus">SEN1726</name>
</gene>
<feature type="chain" id="PRO_1000139832" description="Chitooligosaccharide deacetylase">
    <location>
        <begin position="1"/>
        <end position="252"/>
    </location>
</feature>
<feature type="binding site" evidence="1">
    <location>
        <position position="61"/>
    </location>
    <ligand>
        <name>Mg(2+)</name>
        <dbReference type="ChEBI" id="CHEBI:18420"/>
    </ligand>
</feature>
<feature type="binding site" evidence="1">
    <location>
        <position position="125"/>
    </location>
    <ligand>
        <name>Mg(2+)</name>
        <dbReference type="ChEBI" id="CHEBI:18420"/>
    </ligand>
</feature>
<evidence type="ECO:0000255" key="1">
    <source>
        <dbReference type="HAMAP-Rule" id="MF_01246"/>
    </source>
</evidence>